<organism>
    <name type="scientific">Rickettsia felis (strain ATCC VR-1525 / URRWXCal2)</name>
    <name type="common">Rickettsia azadi</name>
    <dbReference type="NCBI Taxonomy" id="315456"/>
    <lineage>
        <taxon>Bacteria</taxon>
        <taxon>Pseudomonadati</taxon>
        <taxon>Pseudomonadota</taxon>
        <taxon>Alphaproteobacteria</taxon>
        <taxon>Rickettsiales</taxon>
        <taxon>Rickettsiaceae</taxon>
        <taxon>Rickettsieae</taxon>
        <taxon>Rickettsia</taxon>
        <taxon>spotted fever group</taxon>
    </lineage>
</organism>
<proteinExistence type="inferred from homology"/>
<reference key="1">
    <citation type="journal article" date="2005" name="PLoS Biol.">
        <title>The genome sequence of Rickettsia felis identifies the first putative conjugative plasmid in an obligate intracellular parasite.</title>
        <authorList>
            <person name="Ogata H."/>
            <person name="Renesto P."/>
            <person name="Audic S."/>
            <person name="Robert C."/>
            <person name="Blanc G."/>
            <person name="Fournier P.-E."/>
            <person name="Parinello H."/>
            <person name="Claverie J.-M."/>
            <person name="Raoult D."/>
        </authorList>
    </citation>
    <scope>NUCLEOTIDE SEQUENCE [LARGE SCALE GENOMIC DNA]</scope>
    <source>
        <strain>ATCC VR-1525 / URRWXCal2</strain>
    </source>
</reference>
<protein>
    <recommendedName>
        <fullName evidence="1">Fumarate hydratase class II</fullName>
        <shortName evidence="1">Fumarase C</shortName>
        <ecNumber evidence="1">4.2.1.2</ecNumber>
    </recommendedName>
    <alternativeName>
        <fullName evidence="1">Aerobic fumarase</fullName>
    </alternativeName>
    <alternativeName>
        <fullName evidence="1">Iron-independent fumarase</fullName>
    </alternativeName>
</protein>
<keyword id="KW-0963">Cytoplasm</keyword>
<keyword id="KW-0456">Lyase</keyword>
<keyword id="KW-0816">Tricarboxylic acid cycle</keyword>
<feature type="chain" id="PRO_0000277939" description="Fumarate hydratase class II">
    <location>
        <begin position="1"/>
        <end position="461"/>
    </location>
</feature>
<feature type="region of interest" description="Disordered" evidence="2">
    <location>
        <begin position="120"/>
        <end position="140"/>
    </location>
</feature>
<feature type="active site" description="Proton donor/acceptor" evidence="1">
    <location>
        <position position="188"/>
    </location>
</feature>
<feature type="active site" evidence="1">
    <location>
        <position position="318"/>
    </location>
</feature>
<feature type="binding site" evidence="1">
    <location>
        <begin position="98"/>
        <end position="100"/>
    </location>
    <ligand>
        <name>substrate</name>
    </ligand>
</feature>
<feature type="binding site" description="in site B" evidence="1">
    <location>
        <begin position="129"/>
        <end position="132"/>
    </location>
    <ligand>
        <name>substrate</name>
    </ligand>
</feature>
<feature type="binding site" evidence="1">
    <location>
        <begin position="139"/>
        <end position="141"/>
    </location>
    <ligand>
        <name>substrate</name>
    </ligand>
</feature>
<feature type="binding site" evidence="1">
    <location>
        <position position="187"/>
    </location>
    <ligand>
        <name>substrate</name>
    </ligand>
</feature>
<feature type="binding site" evidence="1">
    <location>
        <position position="319"/>
    </location>
    <ligand>
        <name>substrate</name>
    </ligand>
</feature>
<feature type="binding site" evidence="1">
    <location>
        <begin position="324"/>
        <end position="326"/>
    </location>
    <ligand>
        <name>substrate</name>
    </ligand>
</feature>
<feature type="site" description="Important for catalytic activity" evidence="1">
    <location>
        <position position="331"/>
    </location>
</feature>
<evidence type="ECO:0000255" key="1">
    <source>
        <dbReference type="HAMAP-Rule" id="MF_00743"/>
    </source>
</evidence>
<evidence type="ECO:0000256" key="2">
    <source>
        <dbReference type="SAM" id="MobiDB-lite"/>
    </source>
</evidence>
<sequence length="461" mass="50726">MKNYRTESDSFGEIQIEEKFYWGAQTQRSLENFKIGKQKMPEILIRALAILKKCAAQVNYEFGDLEAKIATSIDKATDRILEGEFEDNFPLVVWQTGSGTQTNMNMNEVIASIANEELTSKKGGKSPVHPNDHVNKGQSSNDSFPTAMHIATVLATKQQLIPALNNLLTSLQDKSKDWDKIIKIGRTHLQDATPLTLKQEFSGYITQIEYALERIEDALKKVYLLAQGGTAVGTAINSKIGFDIKFAEKVAEFTKQPFKTAPNKFESLAAHDALVEFSGTLNTIAVSLMKIANDIRLLGSGPRCGLGELHLPENEPGSSIMPGKVNPTQVEALTMVCSQVMGNHVTVTIAGSNGHLELNVFKPVIIYNILQSIELLSDSVNSFVTHCVKGLEPNIARINDLRDKSLMLVTALNPHIGYDNAAKIAKEAHKHGITLKEAAKKLNLLSEEEFDKIVVPEKMIG</sequence>
<comment type="function">
    <text evidence="1">Involved in the TCA cycle. Catalyzes the stereospecific interconversion of fumarate to L-malate.</text>
</comment>
<comment type="catalytic activity">
    <reaction evidence="1">
        <text>(S)-malate = fumarate + H2O</text>
        <dbReference type="Rhea" id="RHEA:12460"/>
        <dbReference type="ChEBI" id="CHEBI:15377"/>
        <dbReference type="ChEBI" id="CHEBI:15589"/>
        <dbReference type="ChEBI" id="CHEBI:29806"/>
        <dbReference type="EC" id="4.2.1.2"/>
    </reaction>
</comment>
<comment type="pathway">
    <text evidence="1">Carbohydrate metabolism; tricarboxylic acid cycle; (S)-malate from fumarate: step 1/1.</text>
</comment>
<comment type="subunit">
    <text evidence="1">Homotetramer.</text>
</comment>
<comment type="subcellular location">
    <subcellularLocation>
        <location evidence="1">Cytoplasm</location>
    </subcellularLocation>
</comment>
<comment type="miscellaneous">
    <text evidence="1">There are 2 substrate-binding sites: the catalytic A site, and the non-catalytic B site that may play a role in the transfer of substrate or product between the active site and the solvent. Alternatively, the B site may bind allosteric effectors.</text>
</comment>
<comment type="similarity">
    <text evidence="1">Belongs to the class-II fumarase/aspartase family. Fumarase subfamily.</text>
</comment>
<dbReference type="EC" id="4.2.1.2" evidence="1"/>
<dbReference type="EMBL" id="CP000053">
    <property type="protein sequence ID" value="AAY61124.1"/>
    <property type="molecule type" value="Genomic_DNA"/>
</dbReference>
<dbReference type="SMR" id="Q4UMT4"/>
<dbReference type="STRING" id="315456.RF_0273"/>
<dbReference type="KEGG" id="rfe:RF_0273"/>
<dbReference type="eggNOG" id="COG0114">
    <property type="taxonomic scope" value="Bacteria"/>
</dbReference>
<dbReference type="HOGENOM" id="CLU_021594_4_1_5"/>
<dbReference type="OrthoDB" id="9802809at2"/>
<dbReference type="UniPathway" id="UPA00223">
    <property type="reaction ID" value="UER01007"/>
</dbReference>
<dbReference type="Proteomes" id="UP000008548">
    <property type="component" value="Chromosome"/>
</dbReference>
<dbReference type="GO" id="GO:0005737">
    <property type="term" value="C:cytoplasm"/>
    <property type="evidence" value="ECO:0007669"/>
    <property type="project" value="UniProtKB-SubCell"/>
</dbReference>
<dbReference type="GO" id="GO:0004333">
    <property type="term" value="F:fumarate hydratase activity"/>
    <property type="evidence" value="ECO:0007669"/>
    <property type="project" value="UniProtKB-UniRule"/>
</dbReference>
<dbReference type="GO" id="GO:0006106">
    <property type="term" value="P:fumarate metabolic process"/>
    <property type="evidence" value="ECO:0007669"/>
    <property type="project" value="InterPro"/>
</dbReference>
<dbReference type="GO" id="GO:0006108">
    <property type="term" value="P:malate metabolic process"/>
    <property type="evidence" value="ECO:0007669"/>
    <property type="project" value="TreeGrafter"/>
</dbReference>
<dbReference type="GO" id="GO:0006099">
    <property type="term" value="P:tricarboxylic acid cycle"/>
    <property type="evidence" value="ECO:0007669"/>
    <property type="project" value="UniProtKB-UniRule"/>
</dbReference>
<dbReference type="CDD" id="cd01362">
    <property type="entry name" value="Fumarase_classII"/>
    <property type="match status" value="1"/>
</dbReference>
<dbReference type="FunFam" id="1.10.40.30:FF:000002">
    <property type="entry name" value="Fumarate hydratase class II"/>
    <property type="match status" value="1"/>
</dbReference>
<dbReference type="FunFam" id="1.10.275.10:FF:000001">
    <property type="entry name" value="Fumarate hydratase, mitochondrial"/>
    <property type="match status" value="1"/>
</dbReference>
<dbReference type="FunFam" id="1.20.200.10:FF:000001">
    <property type="entry name" value="Fumarate hydratase, mitochondrial"/>
    <property type="match status" value="1"/>
</dbReference>
<dbReference type="Gene3D" id="1.10.40.30">
    <property type="entry name" value="Fumarase/aspartase (C-terminal domain)"/>
    <property type="match status" value="1"/>
</dbReference>
<dbReference type="Gene3D" id="1.20.200.10">
    <property type="entry name" value="Fumarase/aspartase (Central domain)"/>
    <property type="match status" value="1"/>
</dbReference>
<dbReference type="Gene3D" id="1.10.275.10">
    <property type="entry name" value="Fumarase/aspartase (N-terminal domain)"/>
    <property type="match status" value="1"/>
</dbReference>
<dbReference type="HAMAP" id="MF_00743">
    <property type="entry name" value="FumaraseC"/>
    <property type="match status" value="1"/>
</dbReference>
<dbReference type="InterPro" id="IPR005677">
    <property type="entry name" value="Fum_hydII"/>
</dbReference>
<dbReference type="InterPro" id="IPR024083">
    <property type="entry name" value="Fumarase/histidase_N"/>
</dbReference>
<dbReference type="InterPro" id="IPR018951">
    <property type="entry name" value="Fumarase_C_C"/>
</dbReference>
<dbReference type="InterPro" id="IPR020557">
    <property type="entry name" value="Fumarate_lyase_CS"/>
</dbReference>
<dbReference type="InterPro" id="IPR000362">
    <property type="entry name" value="Fumarate_lyase_fam"/>
</dbReference>
<dbReference type="InterPro" id="IPR022761">
    <property type="entry name" value="Fumarate_lyase_N"/>
</dbReference>
<dbReference type="InterPro" id="IPR008948">
    <property type="entry name" value="L-Aspartase-like"/>
</dbReference>
<dbReference type="NCBIfam" id="TIGR00979">
    <property type="entry name" value="fumC_II"/>
    <property type="match status" value="1"/>
</dbReference>
<dbReference type="NCBIfam" id="NF008909">
    <property type="entry name" value="PRK12273.1"/>
    <property type="match status" value="1"/>
</dbReference>
<dbReference type="PANTHER" id="PTHR11444">
    <property type="entry name" value="ASPARTATEAMMONIA/ARGININOSUCCINATE/ADENYLOSUCCINATE LYASE"/>
    <property type="match status" value="1"/>
</dbReference>
<dbReference type="PANTHER" id="PTHR11444:SF1">
    <property type="entry name" value="FUMARATE HYDRATASE, MITOCHONDRIAL"/>
    <property type="match status" value="1"/>
</dbReference>
<dbReference type="Pfam" id="PF10415">
    <property type="entry name" value="FumaraseC_C"/>
    <property type="match status" value="1"/>
</dbReference>
<dbReference type="Pfam" id="PF00206">
    <property type="entry name" value="Lyase_1"/>
    <property type="match status" value="1"/>
</dbReference>
<dbReference type="PRINTS" id="PR00145">
    <property type="entry name" value="ARGSUCLYASE"/>
</dbReference>
<dbReference type="PRINTS" id="PR00149">
    <property type="entry name" value="FUMRATELYASE"/>
</dbReference>
<dbReference type="SUPFAM" id="SSF48557">
    <property type="entry name" value="L-aspartase-like"/>
    <property type="match status" value="1"/>
</dbReference>
<dbReference type="PROSITE" id="PS00163">
    <property type="entry name" value="FUMARATE_LYASES"/>
    <property type="match status" value="1"/>
</dbReference>
<name>FUMC_RICFE</name>
<gene>
    <name evidence="1" type="primary">fumC</name>
    <name type="ordered locus">RF_0273</name>
</gene>
<accession>Q4UMT4</accession>